<comment type="function">
    <text evidence="1">Core subunit of the mitochondrial membrane respiratory chain NADH dehydrogenase (Complex I) which catalyzes electron transfer from NADH through the respiratory chain, using ubiquinone as an electron acceptor. Essential for the catalytic activity and assembly of complex I.</text>
</comment>
<comment type="catalytic activity">
    <reaction evidence="1">
        <text>a ubiquinone + NADH + 5 H(+)(in) = a ubiquinol + NAD(+) + 4 H(+)(out)</text>
        <dbReference type="Rhea" id="RHEA:29091"/>
        <dbReference type="Rhea" id="RHEA-COMP:9565"/>
        <dbReference type="Rhea" id="RHEA-COMP:9566"/>
        <dbReference type="ChEBI" id="CHEBI:15378"/>
        <dbReference type="ChEBI" id="CHEBI:16389"/>
        <dbReference type="ChEBI" id="CHEBI:17976"/>
        <dbReference type="ChEBI" id="CHEBI:57540"/>
        <dbReference type="ChEBI" id="CHEBI:57945"/>
        <dbReference type="EC" id="7.1.1.2"/>
    </reaction>
</comment>
<comment type="subunit">
    <text evidence="2">Core subunit of respiratory chain NADH dehydrogenase (Complex I) which is composed of 45 different subunits.</text>
</comment>
<comment type="subcellular location">
    <subcellularLocation>
        <location evidence="2">Mitochondrion inner membrane</location>
        <topology evidence="3">Multi-pass membrane protein</topology>
    </subcellularLocation>
</comment>
<comment type="similarity">
    <text evidence="4">Belongs to the complex I subunit 4 family.</text>
</comment>
<accession>Q9T9W6</accession>
<geneLocation type="mitochondrion"/>
<sequence>MLKLIIPTIMLLPLTWFSKKRMIWINTTTHSLIISTIPLLFFNQINNNLFSCSLSFSSDPLTTPLLMLTAWLLPLTIMASQRHLSNEPPSRKKLYLSMLISLQISLIMTFSATELIMFYIFFETTLIPTLAIITRWGNQPERLNAGTYFLFYTLVGSLPLLIALIYTHNTLGSLNILLLTLTAQELSNTWANNLMWLAYTMAFMVKMPLYGLHLWLPKAHVEAPIAGSMVLAAVLLKLGGYGMMRLTLILNPLTKHMAYPFLMLSLWGMIMTSSICLRQTDLKSLIAYSSVSHMALVVTAILIQTPWSFTGAVILMIAHGLTSSLLFCLANSNYERTHSRIMILSQGLQTLLPLMAFWWLLASLANLALPPTINLLGELSVLVTSFSWSNTTLLLTGFNMLITALYSLYMFTTTQWGSLTHHINNMKPSFTRENTLMFMHLSPILLLSLNPDIITGFTS</sequence>
<feature type="chain" id="PRO_0000117962" description="NADH-ubiquinone oxidoreductase chain 4">
    <location>
        <begin position="1"/>
        <end position="459"/>
    </location>
</feature>
<feature type="transmembrane region" description="Helical" evidence="3">
    <location>
        <begin position="22"/>
        <end position="42"/>
    </location>
</feature>
<feature type="transmembrane region" description="Helical" evidence="3">
    <location>
        <begin position="60"/>
        <end position="80"/>
    </location>
</feature>
<feature type="transmembrane region" description="Helical" evidence="3">
    <location>
        <begin position="94"/>
        <end position="112"/>
    </location>
</feature>
<feature type="transmembrane region" description="Helical" evidence="3">
    <location>
        <begin position="113"/>
        <end position="133"/>
    </location>
</feature>
<feature type="transmembrane region" description="Helical" evidence="3">
    <location>
        <begin position="145"/>
        <end position="165"/>
    </location>
</feature>
<feature type="transmembrane region" description="Helical" evidence="3">
    <location>
        <begin position="196"/>
        <end position="216"/>
    </location>
</feature>
<feature type="transmembrane region" description="Helical" evidence="3">
    <location>
        <begin position="224"/>
        <end position="244"/>
    </location>
</feature>
<feature type="transmembrane region" description="Helical" evidence="3">
    <location>
        <begin position="257"/>
        <end position="277"/>
    </location>
</feature>
<feature type="transmembrane region" description="Helical" evidence="3">
    <location>
        <begin position="284"/>
        <end position="303"/>
    </location>
</feature>
<feature type="transmembrane region" description="Helical" evidence="3">
    <location>
        <begin position="308"/>
        <end position="330"/>
    </location>
</feature>
<feature type="transmembrane region" description="Helical" evidence="3">
    <location>
        <begin position="351"/>
        <end position="371"/>
    </location>
</feature>
<feature type="transmembrane region" description="Helical" evidence="3">
    <location>
        <begin position="391"/>
        <end position="411"/>
    </location>
</feature>
<name>NU4M_PANPA</name>
<protein>
    <recommendedName>
        <fullName>NADH-ubiquinone oxidoreductase chain 4</fullName>
        <ecNumber evidence="1">7.1.1.2</ecNumber>
    </recommendedName>
    <alternativeName>
        <fullName>NADH dehydrogenase subunit 4</fullName>
    </alternativeName>
</protein>
<proteinExistence type="inferred from homology"/>
<dbReference type="EC" id="7.1.1.2" evidence="1"/>
<dbReference type="EMBL" id="D38116">
    <property type="protein sequence ID" value="BAA85300.1"/>
    <property type="molecule type" value="Genomic_DNA"/>
</dbReference>
<dbReference type="RefSeq" id="NP_008208.1">
    <property type="nucleotide sequence ID" value="NC_001644.1"/>
</dbReference>
<dbReference type="SMR" id="Q9T9W6"/>
<dbReference type="STRING" id="9597.ENSPPAP00000000010"/>
<dbReference type="Ensembl" id="ENSPPAT00000000028.1">
    <property type="protein sequence ID" value="ENSPPAP00000000010.1"/>
    <property type="gene ID" value="ENSPPAG00000000028.1"/>
</dbReference>
<dbReference type="GeneID" id="807875"/>
<dbReference type="KEGG" id="pps:807875"/>
<dbReference type="CTD" id="4538"/>
<dbReference type="GeneTree" id="ENSGT00730000111316"/>
<dbReference type="OMA" id="ITRWGNQ"/>
<dbReference type="Proteomes" id="UP000240080">
    <property type="component" value="Mitochondrion"/>
</dbReference>
<dbReference type="Bgee" id="ENSPPAG00000000028">
    <property type="expression patterns" value="Expressed in adult mammalian kidney and 6 other cell types or tissues"/>
</dbReference>
<dbReference type="GO" id="GO:0005743">
    <property type="term" value="C:mitochondrial inner membrane"/>
    <property type="evidence" value="ECO:0000250"/>
    <property type="project" value="UniProtKB"/>
</dbReference>
<dbReference type="GO" id="GO:0045271">
    <property type="term" value="C:respiratory chain complex I"/>
    <property type="evidence" value="ECO:0007669"/>
    <property type="project" value="Ensembl"/>
</dbReference>
<dbReference type="GO" id="GO:0008137">
    <property type="term" value="F:NADH dehydrogenase (ubiquinone) activity"/>
    <property type="evidence" value="ECO:0000250"/>
    <property type="project" value="UniProtKB"/>
</dbReference>
<dbReference type="GO" id="GO:0048039">
    <property type="term" value="F:ubiquinone binding"/>
    <property type="evidence" value="ECO:0007669"/>
    <property type="project" value="TreeGrafter"/>
</dbReference>
<dbReference type="GO" id="GO:0015990">
    <property type="term" value="P:electron transport coupled proton transport"/>
    <property type="evidence" value="ECO:0007669"/>
    <property type="project" value="TreeGrafter"/>
</dbReference>
<dbReference type="GO" id="GO:0006120">
    <property type="term" value="P:mitochondrial electron transport, NADH to ubiquinone"/>
    <property type="evidence" value="ECO:0000250"/>
    <property type="project" value="UniProtKB"/>
</dbReference>
<dbReference type="GO" id="GO:0032981">
    <property type="term" value="P:mitochondrial respiratory chain complex I assembly"/>
    <property type="evidence" value="ECO:0000250"/>
    <property type="project" value="UniProtKB"/>
</dbReference>
<dbReference type="InterPro" id="IPR000260">
    <property type="entry name" value="NADH4_N"/>
</dbReference>
<dbReference type="InterPro" id="IPR010227">
    <property type="entry name" value="NADH_Q_OxRdtase_chainM/4"/>
</dbReference>
<dbReference type="InterPro" id="IPR003918">
    <property type="entry name" value="NADH_UbQ_OxRdtase"/>
</dbReference>
<dbReference type="InterPro" id="IPR001750">
    <property type="entry name" value="ND/Mrp_TM"/>
</dbReference>
<dbReference type="NCBIfam" id="TIGR01972">
    <property type="entry name" value="NDH_I_M"/>
    <property type="match status" value="1"/>
</dbReference>
<dbReference type="PANTHER" id="PTHR43507">
    <property type="entry name" value="NADH-UBIQUINONE OXIDOREDUCTASE CHAIN 4"/>
    <property type="match status" value="1"/>
</dbReference>
<dbReference type="PANTHER" id="PTHR43507:SF20">
    <property type="entry name" value="NADH-UBIQUINONE OXIDOREDUCTASE CHAIN 4"/>
    <property type="match status" value="1"/>
</dbReference>
<dbReference type="Pfam" id="PF01059">
    <property type="entry name" value="Oxidored_q5_N"/>
    <property type="match status" value="1"/>
</dbReference>
<dbReference type="Pfam" id="PF00361">
    <property type="entry name" value="Proton_antipo_M"/>
    <property type="match status" value="1"/>
</dbReference>
<dbReference type="PRINTS" id="PR01437">
    <property type="entry name" value="NUOXDRDTASE4"/>
</dbReference>
<organism>
    <name type="scientific">Pan paniscus</name>
    <name type="common">Pygmy chimpanzee</name>
    <name type="synonym">Bonobo</name>
    <dbReference type="NCBI Taxonomy" id="9597"/>
    <lineage>
        <taxon>Eukaryota</taxon>
        <taxon>Metazoa</taxon>
        <taxon>Chordata</taxon>
        <taxon>Craniata</taxon>
        <taxon>Vertebrata</taxon>
        <taxon>Euteleostomi</taxon>
        <taxon>Mammalia</taxon>
        <taxon>Eutheria</taxon>
        <taxon>Euarchontoglires</taxon>
        <taxon>Primates</taxon>
        <taxon>Haplorrhini</taxon>
        <taxon>Catarrhini</taxon>
        <taxon>Hominidae</taxon>
        <taxon>Pan</taxon>
    </lineage>
</organism>
<gene>
    <name type="primary">MT-ND4</name>
    <name type="synonym">MTND4</name>
    <name type="synonym">NADH4</name>
    <name type="synonym">ND4</name>
</gene>
<keyword id="KW-0249">Electron transport</keyword>
<keyword id="KW-0472">Membrane</keyword>
<keyword id="KW-0496">Mitochondrion</keyword>
<keyword id="KW-0999">Mitochondrion inner membrane</keyword>
<keyword id="KW-0520">NAD</keyword>
<keyword id="KW-1185">Reference proteome</keyword>
<keyword id="KW-0679">Respiratory chain</keyword>
<keyword id="KW-1278">Translocase</keyword>
<keyword id="KW-0812">Transmembrane</keyword>
<keyword id="KW-1133">Transmembrane helix</keyword>
<keyword id="KW-0813">Transport</keyword>
<keyword id="KW-0830">Ubiquinone</keyword>
<reference key="1">
    <citation type="journal article" date="1995" name="Proc. Natl. Acad. Sci. U.S.A.">
        <title>Recent African origin of modern humans revealed by complete sequences of hominoid mitochondrial DNAs.</title>
        <authorList>
            <person name="Horai S."/>
            <person name="Hayasaka K."/>
            <person name="Kondo R."/>
            <person name="Tsugane K."/>
            <person name="Takahata N."/>
        </authorList>
    </citation>
    <scope>NUCLEOTIDE SEQUENCE [GENOMIC DNA]</scope>
</reference>
<evidence type="ECO:0000250" key="1">
    <source>
        <dbReference type="UniProtKB" id="P03905"/>
    </source>
</evidence>
<evidence type="ECO:0000250" key="2">
    <source>
        <dbReference type="UniProtKB" id="P03910"/>
    </source>
</evidence>
<evidence type="ECO:0000255" key="3"/>
<evidence type="ECO:0000305" key="4"/>